<proteinExistence type="inferred from homology"/>
<accession>P0C307</accession>
<sequence length="89" mass="10565">MVYGYGKSNMPHPNRKRKGTDTQYDYWEELLVMVSGLYALFCVFLVLFIFFDSFKQESNKLELSGKEEKKKLNGENRLSRDIQNLLYIK</sequence>
<evidence type="ECO:0000305" key="1"/>
<protein>
    <recommendedName>
        <fullName>Uncharacterized protein ycf70</fullName>
    </recommendedName>
</protein>
<dbReference type="EMBL" id="AY522329">
    <property type="status" value="NOT_ANNOTATED_CDS"/>
    <property type="molecule type" value="Genomic_DNA"/>
</dbReference>
<dbReference type="Proteomes" id="UP000007015">
    <property type="component" value="Chloroplast"/>
</dbReference>
<dbReference type="GO" id="GO:0009507">
    <property type="term" value="C:chloroplast"/>
    <property type="evidence" value="ECO:0007669"/>
    <property type="project" value="UniProtKB-SubCell"/>
</dbReference>
<dbReference type="GO" id="GO:0009536">
    <property type="term" value="C:plastid"/>
    <property type="evidence" value="ECO:0000305"/>
    <property type="project" value="Gramene"/>
</dbReference>
<dbReference type="InterPro" id="IPR035337">
    <property type="entry name" value="Ycf70-like"/>
</dbReference>
<dbReference type="Pfam" id="PF17382">
    <property type="entry name" value="Ycf70"/>
    <property type="match status" value="1"/>
</dbReference>
<organism>
    <name type="scientific">Oryza sativa subsp. indica</name>
    <name type="common">Rice</name>
    <dbReference type="NCBI Taxonomy" id="39946"/>
    <lineage>
        <taxon>Eukaryota</taxon>
        <taxon>Viridiplantae</taxon>
        <taxon>Streptophyta</taxon>
        <taxon>Embryophyta</taxon>
        <taxon>Tracheophyta</taxon>
        <taxon>Spermatophyta</taxon>
        <taxon>Magnoliopsida</taxon>
        <taxon>Liliopsida</taxon>
        <taxon>Poales</taxon>
        <taxon>Poaceae</taxon>
        <taxon>BOP clade</taxon>
        <taxon>Oryzoideae</taxon>
        <taxon>Oryzeae</taxon>
        <taxon>Oryzinae</taxon>
        <taxon>Oryza</taxon>
        <taxon>Oryza sativa</taxon>
    </lineage>
</organism>
<comment type="subcellular location">
    <subcellularLocation>
        <location>Plastid</location>
        <location>Chloroplast</location>
    </subcellularLocation>
</comment>
<comment type="similarity">
    <text evidence="1">Belongs to the ycf70 family.</text>
</comment>
<gene>
    <name type="primary">ycf70</name>
</gene>
<geneLocation type="chloroplast"/>
<name>YCF70_ORYSI</name>
<reference key="1">
    <citation type="journal article" date="2004" name="Plant Physiol.">
        <title>A comparison of rice chloroplast genomes.</title>
        <authorList>
            <person name="Tang J."/>
            <person name="Xia H."/>
            <person name="Cao M."/>
            <person name="Zhang X."/>
            <person name="Zeng W."/>
            <person name="Hu S."/>
            <person name="Tong W."/>
            <person name="Wang J."/>
            <person name="Wang J."/>
            <person name="Yu J."/>
            <person name="Yang H."/>
            <person name="Zhu L."/>
        </authorList>
    </citation>
    <scope>NUCLEOTIDE SEQUENCE [LARGE SCALE GENOMIC DNA]</scope>
    <source>
        <strain>cv. 93-11</strain>
    </source>
</reference>
<feature type="chain" id="PRO_0000288621" description="Uncharacterized protein ycf70">
    <location>
        <begin position="1"/>
        <end position="89"/>
    </location>
</feature>
<keyword id="KW-0150">Chloroplast</keyword>
<keyword id="KW-0934">Plastid</keyword>
<keyword id="KW-1185">Reference proteome</keyword>